<dbReference type="EMBL" id="Y14928">
    <property type="protein sequence ID" value="CAA75145.1"/>
    <property type="molecule type" value="mRNA"/>
</dbReference>
<dbReference type="SMR" id="P81060"/>
<dbReference type="GO" id="GO:0005737">
    <property type="term" value="C:cytoplasm"/>
    <property type="evidence" value="ECO:0007669"/>
    <property type="project" value="InterPro"/>
</dbReference>
<dbReference type="GO" id="GO:0008061">
    <property type="term" value="F:chitin binding"/>
    <property type="evidence" value="ECO:0007669"/>
    <property type="project" value="UniProtKB-KW"/>
</dbReference>
<dbReference type="GO" id="GO:0042742">
    <property type="term" value="P:defense response to bacterium"/>
    <property type="evidence" value="ECO:0007669"/>
    <property type="project" value="UniProtKB-KW"/>
</dbReference>
<dbReference type="GO" id="GO:0050832">
    <property type="term" value="P:defense response to fungus"/>
    <property type="evidence" value="ECO:0007669"/>
    <property type="project" value="UniProtKB-KW"/>
</dbReference>
<dbReference type="GO" id="GO:0031640">
    <property type="term" value="P:killing of cells of another organism"/>
    <property type="evidence" value="ECO:0007669"/>
    <property type="project" value="UniProtKB-KW"/>
</dbReference>
<dbReference type="InterPro" id="IPR009226">
    <property type="entry name" value="Penaeidin"/>
</dbReference>
<dbReference type="Pfam" id="PF05927">
    <property type="entry name" value="Penaeidin"/>
    <property type="match status" value="1"/>
</dbReference>
<name>PEN3C_PENVA</name>
<accession>P81060</accession>
<feature type="signal peptide" evidence="2">
    <location>
        <begin position="1"/>
        <end position="19"/>
    </location>
</feature>
<feature type="chain" id="PRO_0000023508" description="Penaeidin-3c">
    <location>
        <begin position="20"/>
        <end position="80"/>
    </location>
</feature>
<feature type="modified residue" description="Pyrrolidone carboxylic acid" evidence="1">
    <location>
        <position position="20"/>
    </location>
</feature>
<feature type="modified residue" description="Serine amide" evidence="1">
    <location>
        <position position="80"/>
    </location>
</feature>
<feature type="disulfide bond" evidence="1">
    <location>
        <begin position="50"/>
        <end position="65"/>
    </location>
</feature>
<feature type="disulfide bond" evidence="1">
    <location>
        <begin position="54"/>
        <end position="72"/>
    </location>
</feature>
<feature type="disulfide bond" evidence="1">
    <location>
        <begin position="66"/>
        <end position="73"/>
    </location>
</feature>
<organism>
    <name type="scientific">Penaeus vannamei</name>
    <name type="common">Whiteleg shrimp</name>
    <name type="synonym">Litopenaeus vannamei</name>
    <dbReference type="NCBI Taxonomy" id="6689"/>
    <lineage>
        <taxon>Eukaryota</taxon>
        <taxon>Metazoa</taxon>
        <taxon>Ecdysozoa</taxon>
        <taxon>Arthropoda</taxon>
        <taxon>Crustacea</taxon>
        <taxon>Multicrustacea</taxon>
        <taxon>Malacostraca</taxon>
        <taxon>Eumalacostraca</taxon>
        <taxon>Eucarida</taxon>
        <taxon>Decapoda</taxon>
        <taxon>Dendrobranchiata</taxon>
        <taxon>Penaeoidea</taxon>
        <taxon>Penaeidae</taxon>
        <taxon>Penaeus</taxon>
    </lineage>
</organism>
<evidence type="ECO:0000250" key="1"/>
<evidence type="ECO:0000255" key="2"/>
<evidence type="ECO:0000269" key="3">
    <source>
    </source>
</evidence>
<evidence type="ECO:0000305" key="4"/>
<sequence>MRLVVCLVFLASFALVCQGQVYKGGYTRPIPRPPFVRPVPGGPIGPYNGCPVSCRGISFSQARSCCSRLGRCCHVGKGYSG</sequence>
<comment type="function">
    <text>Antibacterial activity against M.luteus and E.coli bacteria. Antifungal activity against N.crassa and F.oxysporum. Presents chitin-binding activity.</text>
</comment>
<comment type="subcellular location">
    <subcellularLocation>
        <location evidence="3">Cytoplasmic granule</location>
    </subcellularLocation>
    <text>Cytoplasmic granules of hemocytes and to a lesser extent in small granules of hemocytes.</text>
</comment>
<comment type="tissue specificity">
    <text evidence="3">Higher expression in hemocytes and to a lesser extent in heart, testis, gills, intestine, lymphoid organ and hepatopancreas. Traces in eyes and subcuticular epithelium. Not present in the brain.</text>
</comment>
<comment type="developmental stage">
    <text evidence="3">Expression decreases 3 hours after microbial challenge to return to control levels after 12 hours and slightly increases after 24 hours.</text>
</comment>
<comment type="similarity">
    <text evidence="4">Belongs to the penaeidin family.</text>
</comment>
<keyword id="KW-0027">Amidation</keyword>
<keyword id="KW-0044">Antibiotic</keyword>
<keyword id="KW-0929">Antimicrobial</keyword>
<keyword id="KW-0147">Chitin-binding</keyword>
<keyword id="KW-1015">Disulfide bond</keyword>
<keyword id="KW-0295">Fungicide</keyword>
<keyword id="KW-0873">Pyrrolidone carboxylic acid</keyword>
<keyword id="KW-0732">Signal</keyword>
<protein>
    <recommendedName>
        <fullName>Penaeidin-3c</fullName>
        <shortName>P3-c</shortName>
        <shortName>Pen-3c</shortName>
    </recommendedName>
</protein>
<reference key="1">
    <citation type="journal article" date="1997" name="J. Biol. Chem.">
        <title>Penaeidins, a new family of antimicrobial peptides isolated from the shrimp Penaeus vannamei (Decapoda).</title>
        <authorList>
            <person name="Destoumieux D."/>
            <person name="Bulet P."/>
            <person name="Loew D."/>
            <person name="van Dorsselaer A."/>
            <person name="Rodriguez J."/>
            <person name="Bachere E."/>
        </authorList>
    </citation>
    <scope>NUCLEOTIDE SEQUENCE [MRNA]</scope>
    <source>
        <tissue>Hemocyte</tissue>
    </source>
</reference>
<reference key="2">
    <citation type="journal article" date="2000" name="J. Cell Sci.">
        <title>Penaeidins, antimicrobial peptides with chitin-binding activity, are produced and stored in shrimp granulocytes and released after microbial challenge.</title>
        <authorList>
            <person name="Destoumieux D."/>
            <person name="Munoz M."/>
            <person name="Cosseau C."/>
            <person name="Rodriguez J."/>
            <person name="Bulet P."/>
            <person name="Comps M."/>
            <person name="Bachere E."/>
        </authorList>
    </citation>
    <scope>CHITIN-BINDING PROPERTIES</scope>
    <scope>TISSUE SPECIFICITY</scope>
    <scope>SUBCELLULAR LOCATION</scope>
    <scope>DEVELOPMENTAL STAGE</scope>
    <source>
        <tissue>Hemocyte</tissue>
    </source>
</reference>
<reference key="3">
    <citation type="journal article" date="2000" name="Cell. Mol. Life Sci.">
        <title>Penaeidins, a family of antimicrobial peptides from penaeid shrimp (Crustacea, Decapoda).</title>
        <authorList>
            <person name="Destoumieux D."/>
            <person name="Munoz M."/>
            <person name="Bulet P."/>
            <person name="Bachere E."/>
        </authorList>
    </citation>
    <scope>REVIEW</scope>
</reference>
<proteinExistence type="evidence at protein level"/>